<dbReference type="EC" id="6.3.4.16" evidence="1"/>
<dbReference type="EC" id="6.3.5.5" evidence="1"/>
<dbReference type="EMBL" id="CP000910">
    <property type="protein sequence ID" value="ABY23696.1"/>
    <property type="molecule type" value="Genomic_DNA"/>
</dbReference>
<dbReference type="RefSeq" id="WP_012245366.1">
    <property type="nucleotide sequence ID" value="NC_010168.1"/>
</dbReference>
<dbReference type="SMR" id="A9WSA8"/>
<dbReference type="STRING" id="288705.RSal33209_1963"/>
<dbReference type="KEGG" id="rsa:RSal33209_1963"/>
<dbReference type="eggNOG" id="COG0458">
    <property type="taxonomic scope" value="Bacteria"/>
</dbReference>
<dbReference type="HOGENOM" id="CLU_000513_1_0_11"/>
<dbReference type="UniPathway" id="UPA00068">
    <property type="reaction ID" value="UER00171"/>
</dbReference>
<dbReference type="UniPathway" id="UPA00070">
    <property type="reaction ID" value="UER00115"/>
</dbReference>
<dbReference type="Proteomes" id="UP000002007">
    <property type="component" value="Chromosome"/>
</dbReference>
<dbReference type="GO" id="GO:0005737">
    <property type="term" value="C:cytoplasm"/>
    <property type="evidence" value="ECO:0007669"/>
    <property type="project" value="TreeGrafter"/>
</dbReference>
<dbReference type="GO" id="GO:0005524">
    <property type="term" value="F:ATP binding"/>
    <property type="evidence" value="ECO:0007669"/>
    <property type="project" value="UniProtKB-UniRule"/>
</dbReference>
<dbReference type="GO" id="GO:0004087">
    <property type="term" value="F:carbamoyl-phosphate synthase (ammonia) activity"/>
    <property type="evidence" value="ECO:0007669"/>
    <property type="project" value="RHEA"/>
</dbReference>
<dbReference type="GO" id="GO:0004088">
    <property type="term" value="F:carbamoyl-phosphate synthase (glutamine-hydrolyzing) activity"/>
    <property type="evidence" value="ECO:0007669"/>
    <property type="project" value="UniProtKB-UniRule"/>
</dbReference>
<dbReference type="GO" id="GO:0046872">
    <property type="term" value="F:metal ion binding"/>
    <property type="evidence" value="ECO:0007669"/>
    <property type="project" value="UniProtKB-KW"/>
</dbReference>
<dbReference type="GO" id="GO:0044205">
    <property type="term" value="P:'de novo' UMP biosynthetic process"/>
    <property type="evidence" value="ECO:0007669"/>
    <property type="project" value="UniProtKB-UniRule"/>
</dbReference>
<dbReference type="GO" id="GO:0006541">
    <property type="term" value="P:glutamine metabolic process"/>
    <property type="evidence" value="ECO:0007669"/>
    <property type="project" value="TreeGrafter"/>
</dbReference>
<dbReference type="GO" id="GO:0006526">
    <property type="term" value="P:L-arginine biosynthetic process"/>
    <property type="evidence" value="ECO:0007669"/>
    <property type="project" value="UniProtKB-UniRule"/>
</dbReference>
<dbReference type="CDD" id="cd01424">
    <property type="entry name" value="MGS_CPS_II"/>
    <property type="match status" value="1"/>
</dbReference>
<dbReference type="FunFam" id="1.10.1030.10:FF:000002">
    <property type="entry name" value="Carbamoyl-phosphate synthase large chain"/>
    <property type="match status" value="1"/>
</dbReference>
<dbReference type="FunFam" id="3.30.1490.20:FF:000001">
    <property type="entry name" value="Carbamoyl-phosphate synthase large chain"/>
    <property type="match status" value="1"/>
</dbReference>
<dbReference type="FunFam" id="3.30.470.20:FF:000007">
    <property type="entry name" value="Carbamoyl-phosphate synthase large chain"/>
    <property type="match status" value="1"/>
</dbReference>
<dbReference type="FunFam" id="3.30.470.20:FF:000014">
    <property type="entry name" value="Carbamoyl-phosphate synthase large chain"/>
    <property type="match status" value="1"/>
</dbReference>
<dbReference type="FunFam" id="3.40.50.20:FF:000001">
    <property type="entry name" value="Carbamoyl-phosphate synthase large chain"/>
    <property type="match status" value="2"/>
</dbReference>
<dbReference type="Gene3D" id="3.40.50.20">
    <property type="match status" value="2"/>
</dbReference>
<dbReference type="Gene3D" id="3.30.1490.20">
    <property type="entry name" value="ATP-grasp fold, A domain"/>
    <property type="match status" value="1"/>
</dbReference>
<dbReference type="Gene3D" id="3.30.470.20">
    <property type="entry name" value="ATP-grasp fold, B domain"/>
    <property type="match status" value="2"/>
</dbReference>
<dbReference type="Gene3D" id="1.10.1030.10">
    <property type="entry name" value="Carbamoyl-phosphate synthetase, large subunit oligomerisation domain"/>
    <property type="match status" value="1"/>
</dbReference>
<dbReference type="Gene3D" id="3.40.50.1380">
    <property type="entry name" value="Methylglyoxal synthase-like domain"/>
    <property type="match status" value="1"/>
</dbReference>
<dbReference type="HAMAP" id="MF_01210_B">
    <property type="entry name" value="CPSase_L_chain_B"/>
    <property type="match status" value="1"/>
</dbReference>
<dbReference type="InterPro" id="IPR011761">
    <property type="entry name" value="ATP-grasp"/>
</dbReference>
<dbReference type="InterPro" id="IPR013815">
    <property type="entry name" value="ATP_grasp_subdomain_1"/>
</dbReference>
<dbReference type="InterPro" id="IPR006275">
    <property type="entry name" value="CarbamoylP_synth_lsu"/>
</dbReference>
<dbReference type="InterPro" id="IPR005480">
    <property type="entry name" value="CarbamoylP_synth_lsu_oligo"/>
</dbReference>
<dbReference type="InterPro" id="IPR036897">
    <property type="entry name" value="CarbamoylP_synth_lsu_oligo_sf"/>
</dbReference>
<dbReference type="InterPro" id="IPR005479">
    <property type="entry name" value="CbamoylP_synth_lsu-like_ATP-bd"/>
</dbReference>
<dbReference type="InterPro" id="IPR005483">
    <property type="entry name" value="CbamoylP_synth_lsu_CPSase_dom"/>
</dbReference>
<dbReference type="InterPro" id="IPR011607">
    <property type="entry name" value="MGS-like_dom"/>
</dbReference>
<dbReference type="InterPro" id="IPR036914">
    <property type="entry name" value="MGS-like_dom_sf"/>
</dbReference>
<dbReference type="InterPro" id="IPR033937">
    <property type="entry name" value="MGS_CPS_CarB"/>
</dbReference>
<dbReference type="InterPro" id="IPR016185">
    <property type="entry name" value="PreATP-grasp_dom_sf"/>
</dbReference>
<dbReference type="NCBIfam" id="TIGR01369">
    <property type="entry name" value="CPSaseII_lrg"/>
    <property type="match status" value="1"/>
</dbReference>
<dbReference type="NCBIfam" id="NF003671">
    <property type="entry name" value="PRK05294.1"/>
    <property type="match status" value="1"/>
</dbReference>
<dbReference type="NCBIfam" id="NF009455">
    <property type="entry name" value="PRK12815.1"/>
    <property type="match status" value="1"/>
</dbReference>
<dbReference type="PANTHER" id="PTHR11405:SF53">
    <property type="entry name" value="CARBAMOYL-PHOSPHATE SYNTHASE [AMMONIA], MITOCHONDRIAL"/>
    <property type="match status" value="1"/>
</dbReference>
<dbReference type="PANTHER" id="PTHR11405">
    <property type="entry name" value="CARBAMOYLTRANSFERASE FAMILY MEMBER"/>
    <property type="match status" value="1"/>
</dbReference>
<dbReference type="Pfam" id="PF02786">
    <property type="entry name" value="CPSase_L_D2"/>
    <property type="match status" value="2"/>
</dbReference>
<dbReference type="Pfam" id="PF02787">
    <property type="entry name" value="CPSase_L_D3"/>
    <property type="match status" value="1"/>
</dbReference>
<dbReference type="Pfam" id="PF02142">
    <property type="entry name" value="MGS"/>
    <property type="match status" value="1"/>
</dbReference>
<dbReference type="PRINTS" id="PR00098">
    <property type="entry name" value="CPSASE"/>
</dbReference>
<dbReference type="SMART" id="SM01096">
    <property type="entry name" value="CPSase_L_D3"/>
    <property type="match status" value="1"/>
</dbReference>
<dbReference type="SMART" id="SM00851">
    <property type="entry name" value="MGS"/>
    <property type="match status" value="1"/>
</dbReference>
<dbReference type="SUPFAM" id="SSF48108">
    <property type="entry name" value="Carbamoyl phosphate synthetase, large subunit connection domain"/>
    <property type="match status" value="1"/>
</dbReference>
<dbReference type="SUPFAM" id="SSF56059">
    <property type="entry name" value="Glutathione synthetase ATP-binding domain-like"/>
    <property type="match status" value="2"/>
</dbReference>
<dbReference type="SUPFAM" id="SSF52335">
    <property type="entry name" value="Methylglyoxal synthase-like"/>
    <property type="match status" value="1"/>
</dbReference>
<dbReference type="SUPFAM" id="SSF52440">
    <property type="entry name" value="PreATP-grasp domain"/>
    <property type="match status" value="2"/>
</dbReference>
<dbReference type="PROSITE" id="PS50975">
    <property type="entry name" value="ATP_GRASP"/>
    <property type="match status" value="2"/>
</dbReference>
<dbReference type="PROSITE" id="PS00866">
    <property type="entry name" value="CPSASE_1"/>
    <property type="match status" value="2"/>
</dbReference>
<dbReference type="PROSITE" id="PS00867">
    <property type="entry name" value="CPSASE_2"/>
    <property type="match status" value="2"/>
</dbReference>
<dbReference type="PROSITE" id="PS51855">
    <property type="entry name" value="MGS"/>
    <property type="match status" value="1"/>
</dbReference>
<keyword id="KW-0028">Amino-acid biosynthesis</keyword>
<keyword id="KW-0055">Arginine biosynthesis</keyword>
<keyword id="KW-0067">ATP-binding</keyword>
<keyword id="KW-0436">Ligase</keyword>
<keyword id="KW-0460">Magnesium</keyword>
<keyword id="KW-0464">Manganese</keyword>
<keyword id="KW-0479">Metal-binding</keyword>
<keyword id="KW-0547">Nucleotide-binding</keyword>
<keyword id="KW-0665">Pyrimidine biosynthesis</keyword>
<keyword id="KW-1185">Reference proteome</keyword>
<keyword id="KW-0677">Repeat</keyword>
<name>CARB_RENSM</name>
<gene>
    <name evidence="1" type="primary">carB</name>
    <name type="ordered locus">RSal33209_1963</name>
</gene>
<organism>
    <name type="scientific">Renibacterium salmoninarum (strain ATCC 33209 / DSM 20767 / JCM 11484 / NBRC 15589 / NCIMB 2235)</name>
    <dbReference type="NCBI Taxonomy" id="288705"/>
    <lineage>
        <taxon>Bacteria</taxon>
        <taxon>Bacillati</taxon>
        <taxon>Actinomycetota</taxon>
        <taxon>Actinomycetes</taxon>
        <taxon>Micrococcales</taxon>
        <taxon>Micrococcaceae</taxon>
        <taxon>Renibacterium</taxon>
    </lineage>
</organism>
<proteinExistence type="inferred from homology"/>
<sequence length="1106" mass="118225">MPKREDLKSVLVIGSGPIVIGQAAEFDYSGTQALRVLKEEGLRVILVNSNPATIMTDPEFADATYVEPITPEVVEKIIAKERPDALLPTLGGQTALNTAIALDKNGVLAKYNVELIGANIAAIELGEDREKFKGVVERCGAESARSHIVHAMDEALVAAADLGYPLVVRPSFTMGGLGSGLAYNEKDLHRIAGAGLQYSPTSEVLLEESILGWKEYELEMMRDKNDNVVVVCSIENFDPVGVHTGDSITVAPAMTLTDREYQNLRDISIAVIREVGVDTGGCNIQFAIEPDTGRVVVIEMNPRVSRSSALASKATGFAIAKIATKLSLGYTLDEIPNDITQKTPASFEPTLDYVVVKVPRFAFEKFPAADPTLTTTMKSVGEAMAIGRNFTEALQKALRSLEQKGSQLDFGSVNALDVPELIEAAKRPTTDRLGQVQRALAGGASVEDLYAATGIDPWFLEQLQLLNEVAVELKQAPQLHESLLRKAKRHGFSDEQIAGLTNNAEAVVRGVRQALGIRPVYKTVDTCAAEFAAYTPYHYSSYDQEDEIALHEKPSVIILGSGPNRIGQGIEFDYSCVHASMALRKAGYETVMVNCNPETVSTDYDVSTRLYFEPLTLEDVLEVIAAEERTGGVMGVFVQLGGQTPLKLAQDLADAGVPILGTPPEAIDLAEHRGQFARVLDIAGLIAPKNGAAVSFEDAKRVADEIGYPVLVRPSYVLGGRGMEIVYDEPNLLRYITNATEITPDHPVLIDRFLEDAIEIDVDALYDGKELYLGGVMEHIEEAGIHSGDSACVLPPITLGQGVVDRVRDATQAIAEGVGVRGLINIQFALASDVLYVLEANPRASRTVPFVSKATGVQLAKAAALIGTGVTINQLRTAYKMIPSLPGTPGGFDGGSLPVGAPVAVKEAVLPFSRFRTPEGAVVDSLLGPEMRSTGEVMGIDKHFDTAFAKSQAAANNALPTEGKVFVSVANRDKRAVIMAVKLLADLGFEIVSTGGTADVLRRNGIQSSTVRKVAEGTSAEGEGTITDLIIAGEIDMVFNTPSGGEARGDGYEIRAAAISIGIPCITTVAEFNVAVLAIEAMRSFEWNVTSLQEHAEALLEAAANV</sequence>
<accession>A9WSA8</accession>
<evidence type="ECO:0000255" key="1">
    <source>
        <dbReference type="HAMAP-Rule" id="MF_01210"/>
    </source>
</evidence>
<protein>
    <recommendedName>
        <fullName evidence="1">Carbamoyl phosphate synthase large chain</fullName>
        <ecNumber evidence="1">6.3.4.16</ecNumber>
        <ecNumber evidence="1">6.3.5.5</ecNumber>
    </recommendedName>
    <alternativeName>
        <fullName evidence="1">Carbamoyl phosphate synthetase ammonia chain</fullName>
    </alternativeName>
</protein>
<reference key="1">
    <citation type="journal article" date="2008" name="J. Bacteriol.">
        <title>Genome sequence of the fish pathogen Renibacterium salmoninarum suggests reductive evolution away from an environmental Arthrobacter ancestor.</title>
        <authorList>
            <person name="Wiens G.D."/>
            <person name="Rockey D.D."/>
            <person name="Wu Z."/>
            <person name="Chang J."/>
            <person name="Levy R."/>
            <person name="Crane S."/>
            <person name="Chen D.S."/>
            <person name="Capri G.R."/>
            <person name="Burnett J.R."/>
            <person name="Sudheesh P.S."/>
            <person name="Schipma M.J."/>
            <person name="Burd H."/>
            <person name="Bhattacharyya A."/>
            <person name="Rhodes L.D."/>
            <person name="Kaul R."/>
            <person name="Strom M.S."/>
        </authorList>
    </citation>
    <scope>NUCLEOTIDE SEQUENCE [LARGE SCALE GENOMIC DNA]</scope>
    <source>
        <strain>ATCC 33209 / DSM 20767 / JCM 11484 / NBRC 15589 / NCIMB 2235</strain>
    </source>
</reference>
<feature type="chain" id="PRO_1000085561" description="Carbamoyl phosphate synthase large chain">
    <location>
        <begin position="1"/>
        <end position="1106"/>
    </location>
</feature>
<feature type="domain" description="ATP-grasp 1" evidence="1">
    <location>
        <begin position="133"/>
        <end position="328"/>
    </location>
</feature>
<feature type="domain" description="ATP-grasp 2" evidence="1">
    <location>
        <begin position="677"/>
        <end position="868"/>
    </location>
</feature>
<feature type="domain" description="MGS-like" evidence="1">
    <location>
        <begin position="957"/>
        <end position="1106"/>
    </location>
</feature>
<feature type="region of interest" description="Carboxyphosphate synthetic domain" evidence="1">
    <location>
        <begin position="1"/>
        <end position="402"/>
    </location>
</feature>
<feature type="region of interest" description="Oligomerization domain" evidence="1">
    <location>
        <begin position="403"/>
        <end position="546"/>
    </location>
</feature>
<feature type="region of interest" description="Carbamoyl phosphate synthetic domain" evidence="1">
    <location>
        <begin position="547"/>
        <end position="956"/>
    </location>
</feature>
<feature type="region of interest" description="Allosteric domain" evidence="1">
    <location>
        <begin position="957"/>
        <end position="1106"/>
    </location>
</feature>
<feature type="binding site" evidence="1">
    <location>
        <position position="129"/>
    </location>
    <ligand>
        <name>ATP</name>
        <dbReference type="ChEBI" id="CHEBI:30616"/>
        <label>1</label>
    </ligand>
</feature>
<feature type="binding site" evidence="1">
    <location>
        <position position="169"/>
    </location>
    <ligand>
        <name>ATP</name>
        <dbReference type="ChEBI" id="CHEBI:30616"/>
        <label>1</label>
    </ligand>
</feature>
<feature type="binding site" evidence="1">
    <location>
        <position position="175"/>
    </location>
    <ligand>
        <name>ATP</name>
        <dbReference type="ChEBI" id="CHEBI:30616"/>
        <label>1</label>
    </ligand>
</feature>
<feature type="binding site" evidence="1">
    <location>
        <position position="176"/>
    </location>
    <ligand>
        <name>ATP</name>
        <dbReference type="ChEBI" id="CHEBI:30616"/>
        <label>1</label>
    </ligand>
</feature>
<feature type="binding site" evidence="1">
    <location>
        <position position="208"/>
    </location>
    <ligand>
        <name>ATP</name>
        <dbReference type="ChEBI" id="CHEBI:30616"/>
        <label>1</label>
    </ligand>
</feature>
<feature type="binding site" evidence="1">
    <location>
        <position position="210"/>
    </location>
    <ligand>
        <name>ATP</name>
        <dbReference type="ChEBI" id="CHEBI:30616"/>
        <label>1</label>
    </ligand>
</feature>
<feature type="binding site" evidence="1">
    <location>
        <position position="215"/>
    </location>
    <ligand>
        <name>ATP</name>
        <dbReference type="ChEBI" id="CHEBI:30616"/>
        <label>1</label>
    </ligand>
</feature>
<feature type="binding site" evidence="1">
    <location>
        <position position="241"/>
    </location>
    <ligand>
        <name>ATP</name>
        <dbReference type="ChEBI" id="CHEBI:30616"/>
        <label>1</label>
    </ligand>
</feature>
<feature type="binding site" evidence="1">
    <location>
        <position position="242"/>
    </location>
    <ligand>
        <name>ATP</name>
        <dbReference type="ChEBI" id="CHEBI:30616"/>
        <label>1</label>
    </ligand>
</feature>
<feature type="binding site" evidence="1">
    <location>
        <position position="243"/>
    </location>
    <ligand>
        <name>ATP</name>
        <dbReference type="ChEBI" id="CHEBI:30616"/>
        <label>1</label>
    </ligand>
</feature>
<feature type="binding site" evidence="1">
    <location>
        <position position="285"/>
    </location>
    <ligand>
        <name>ATP</name>
        <dbReference type="ChEBI" id="CHEBI:30616"/>
        <label>1</label>
    </ligand>
</feature>
<feature type="binding site" evidence="1">
    <location>
        <position position="285"/>
    </location>
    <ligand>
        <name>Mg(2+)</name>
        <dbReference type="ChEBI" id="CHEBI:18420"/>
        <label>1</label>
    </ligand>
</feature>
<feature type="binding site" evidence="1">
    <location>
        <position position="285"/>
    </location>
    <ligand>
        <name>Mn(2+)</name>
        <dbReference type="ChEBI" id="CHEBI:29035"/>
        <label>1</label>
    </ligand>
</feature>
<feature type="binding site" evidence="1">
    <location>
        <position position="299"/>
    </location>
    <ligand>
        <name>ATP</name>
        <dbReference type="ChEBI" id="CHEBI:30616"/>
        <label>1</label>
    </ligand>
</feature>
<feature type="binding site" evidence="1">
    <location>
        <position position="299"/>
    </location>
    <ligand>
        <name>Mg(2+)</name>
        <dbReference type="ChEBI" id="CHEBI:18420"/>
        <label>1</label>
    </ligand>
</feature>
<feature type="binding site" evidence="1">
    <location>
        <position position="299"/>
    </location>
    <ligand>
        <name>Mg(2+)</name>
        <dbReference type="ChEBI" id="CHEBI:18420"/>
        <label>2</label>
    </ligand>
</feature>
<feature type="binding site" evidence="1">
    <location>
        <position position="299"/>
    </location>
    <ligand>
        <name>Mn(2+)</name>
        <dbReference type="ChEBI" id="CHEBI:29035"/>
        <label>1</label>
    </ligand>
</feature>
<feature type="binding site" evidence="1">
    <location>
        <position position="299"/>
    </location>
    <ligand>
        <name>Mn(2+)</name>
        <dbReference type="ChEBI" id="CHEBI:29035"/>
        <label>2</label>
    </ligand>
</feature>
<feature type="binding site" evidence="1">
    <location>
        <position position="301"/>
    </location>
    <ligand>
        <name>Mg(2+)</name>
        <dbReference type="ChEBI" id="CHEBI:18420"/>
        <label>2</label>
    </ligand>
</feature>
<feature type="binding site" evidence="1">
    <location>
        <position position="301"/>
    </location>
    <ligand>
        <name>Mn(2+)</name>
        <dbReference type="ChEBI" id="CHEBI:29035"/>
        <label>2</label>
    </ligand>
</feature>
<feature type="binding site" evidence="1">
    <location>
        <position position="713"/>
    </location>
    <ligand>
        <name>ATP</name>
        <dbReference type="ChEBI" id="CHEBI:30616"/>
        <label>2</label>
    </ligand>
</feature>
<feature type="binding site" evidence="1">
    <location>
        <position position="752"/>
    </location>
    <ligand>
        <name>ATP</name>
        <dbReference type="ChEBI" id="CHEBI:30616"/>
        <label>2</label>
    </ligand>
</feature>
<feature type="binding site" evidence="1">
    <location>
        <position position="754"/>
    </location>
    <ligand>
        <name>ATP</name>
        <dbReference type="ChEBI" id="CHEBI:30616"/>
        <label>2</label>
    </ligand>
</feature>
<feature type="binding site" evidence="1">
    <location>
        <position position="759"/>
    </location>
    <ligand>
        <name>ATP</name>
        <dbReference type="ChEBI" id="CHEBI:30616"/>
        <label>2</label>
    </ligand>
</feature>
<feature type="binding site" evidence="1">
    <location>
        <position position="784"/>
    </location>
    <ligand>
        <name>ATP</name>
        <dbReference type="ChEBI" id="CHEBI:30616"/>
        <label>2</label>
    </ligand>
</feature>
<feature type="binding site" evidence="1">
    <location>
        <position position="785"/>
    </location>
    <ligand>
        <name>ATP</name>
        <dbReference type="ChEBI" id="CHEBI:30616"/>
        <label>2</label>
    </ligand>
</feature>
<feature type="binding site" evidence="1">
    <location>
        <position position="786"/>
    </location>
    <ligand>
        <name>ATP</name>
        <dbReference type="ChEBI" id="CHEBI:30616"/>
        <label>2</label>
    </ligand>
</feature>
<feature type="binding site" evidence="1">
    <location>
        <position position="787"/>
    </location>
    <ligand>
        <name>ATP</name>
        <dbReference type="ChEBI" id="CHEBI:30616"/>
        <label>2</label>
    </ligand>
</feature>
<feature type="binding site" evidence="1">
    <location>
        <position position="827"/>
    </location>
    <ligand>
        <name>ATP</name>
        <dbReference type="ChEBI" id="CHEBI:30616"/>
        <label>2</label>
    </ligand>
</feature>
<feature type="binding site" evidence="1">
    <location>
        <position position="827"/>
    </location>
    <ligand>
        <name>Mg(2+)</name>
        <dbReference type="ChEBI" id="CHEBI:18420"/>
        <label>3</label>
    </ligand>
</feature>
<feature type="binding site" evidence="1">
    <location>
        <position position="827"/>
    </location>
    <ligand>
        <name>Mn(2+)</name>
        <dbReference type="ChEBI" id="CHEBI:29035"/>
        <label>3</label>
    </ligand>
</feature>
<feature type="binding site" evidence="1">
    <location>
        <position position="839"/>
    </location>
    <ligand>
        <name>ATP</name>
        <dbReference type="ChEBI" id="CHEBI:30616"/>
        <label>2</label>
    </ligand>
</feature>
<feature type="binding site" evidence="1">
    <location>
        <position position="839"/>
    </location>
    <ligand>
        <name>Mg(2+)</name>
        <dbReference type="ChEBI" id="CHEBI:18420"/>
        <label>3</label>
    </ligand>
</feature>
<feature type="binding site" evidence="1">
    <location>
        <position position="839"/>
    </location>
    <ligand>
        <name>Mg(2+)</name>
        <dbReference type="ChEBI" id="CHEBI:18420"/>
        <label>4</label>
    </ligand>
</feature>
<feature type="binding site" evidence="1">
    <location>
        <position position="839"/>
    </location>
    <ligand>
        <name>Mn(2+)</name>
        <dbReference type="ChEBI" id="CHEBI:29035"/>
        <label>3</label>
    </ligand>
</feature>
<feature type="binding site" evidence="1">
    <location>
        <position position="839"/>
    </location>
    <ligand>
        <name>Mn(2+)</name>
        <dbReference type="ChEBI" id="CHEBI:29035"/>
        <label>4</label>
    </ligand>
</feature>
<feature type="binding site" evidence="1">
    <location>
        <position position="841"/>
    </location>
    <ligand>
        <name>Mg(2+)</name>
        <dbReference type="ChEBI" id="CHEBI:18420"/>
        <label>4</label>
    </ligand>
</feature>
<feature type="binding site" evidence="1">
    <location>
        <position position="841"/>
    </location>
    <ligand>
        <name>Mn(2+)</name>
        <dbReference type="ChEBI" id="CHEBI:29035"/>
        <label>4</label>
    </ligand>
</feature>
<comment type="function">
    <text evidence="1">Large subunit of the glutamine-dependent carbamoyl phosphate synthetase (CPSase). CPSase catalyzes the formation of carbamoyl phosphate from the ammonia moiety of glutamine, carbonate, and phosphate donated by ATP, constituting the first step of 2 biosynthetic pathways, one leading to arginine and/or urea and the other to pyrimidine nucleotides. The large subunit (synthetase) binds the substrates ammonia (free or transferred from glutamine from the small subunit), hydrogencarbonate and ATP and carries out an ATP-coupled ligase reaction, activating hydrogencarbonate by forming carboxy phosphate which reacts with ammonia to form carbamoyl phosphate.</text>
</comment>
<comment type="catalytic activity">
    <reaction evidence="1">
        <text>hydrogencarbonate + L-glutamine + 2 ATP + H2O = carbamoyl phosphate + L-glutamate + 2 ADP + phosphate + 2 H(+)</text>
        <dbReference type="Rhea" id="RHEA:18633"/>
        <dbReference type="ChEBI" id="CHEBI:15377"/>
        <dbReference type="ChEBI" id="CHEBI:15378"/>
        <dbReference type="ChEBI" id="CHEBI:17544"/>
        <dbReference type="ChEBI" id="CHEBI:29985"/>
        <dbReference type="ChEBI" id="CHEBI:30616"/>
        <dbReference type="ChEBI" id="CHEBI:43474"/>
        <dbReference type="ChEBI" id="CHEBI:58228"/>
        <dbReference type="ChEBI" id="CHEBI:58359"/>
        <dbReference type="ChEBI" id="CHEBI:456216"/>
        <dbReference type="EC" id="6.3.5.5"/>
    </reaction>
</comment>
<comment type="catalytic activity">
    <molecule>Carbamoyl phosphate synthase large chain</molecule>
    <reaction evidence="1">
        <text>hydrogencarbonate + NH4(+) + 2 ATP = carbamoyl phosphate + 2 ADP + phosphate + 2 H(+)</text>
        <dbReference type="Rhea" id="RHEA:18029"/>
        <dbReference type="ChEBI" id="CHEBI:15378"/>
        <dbReference type="ChEBI" id="CHEBI:17544"/>
        <dbReference type="ChEBI" id="CHEBI:28938"/>
        <dbReference type="ChEBI" id="CHEBI:30616"/>
        <dbReference type="ChEBI" id="CHEBI:43474"/>
        <dbReference type="ChEBI" id="CHEBI:58228"/>
        <dbReference type="ChEBI" id="CHEBI:456216"/>
        <dbReference type="EC" id="6.3.4.16"/>
    </reaction>
</comment>
<comment type="cofactor">
    <cofactor evidence="1">
        <name>Mg(2+)</name>
        <dbReference type="ChEBI" id="CHEBI:18420"/>
    </cofactor>
    <cofactor evidence="1">
        <name>Mn(2+)</name>
        <dbReference type="ChEBI" id="CHEBI:29035"/>
    </cofactor>
    <text evidence="1">Binds 4 Mg(2+) or Mn(2+) ions per subunit.</text>
</comment>
<comment type="pathway">
    <text evidence="1">Amino-acid biosynthesis; L-arginine biosynthesis; carbamoyl phosphate from bicarbonate: step 1/1.</text>
</comment>
<comment type="pathway">
    <text evidence="1">Pyrimidine metabolism; UMP biosynthesis via de novo pathway; (S)-dihydroorotate from bicarbonate: step 1/3.</text>
</comment>
<comment type="subunit">
    <text evidence="1">Composed of two chains; the small (or glutamine) chain promotes the hydrolysis of glutamine to ammonia, which is used by the large (or ammonia) chain to synthesize carbamoyl phosphate. Tetramer of heterodimers (alpha,beta)4.</text>
</comment>
<comment type="domain">
    <text evidence="1">The large subunit is composed of 2 ATP-grasp domains that are involved in binding the 2 ATP molecules needed for carbamoyl phosphate synthesis. The N-terminal ATP-grasp domain (referred to as the carboxyphosphate synthetic component) catalyzes the ATP-dependent phosphorylation of hydrogencarbonate to carboxyphosphate and the subsequent nucleophilic attack by ammonia to form a carbamate intermediate. The C-terminal ATP-grasp domain (referred to as the carbamoyl phosphate synthetic component) then catalyzes the phosphorylation of carbamate with the second ATP to form the end product carbamoyl phosphate. The reactive and unstable enzyme intermediates are sequentially channeled from one active site to the next through the interior of the protein over a distance of at least 96 A.</text>
</comment>
<comment type="similarity">
    <text evidence="1">Belongs to the CarB family.</text>
</comment>